<evidence type="ECO:0000255" key="1">
    <source>
        <dbReference type="PROSITE-ProRule" id="PRU00080"/>
    </source>
</evidence>
<evidence type="ECO:0000255" key="2">
    <source>
        <dbReference type="PROSITE-ProRule" id="PRU01088"/>
    </source>
</evidence>
<evidence type="ECO:0000305" key="3"/>
<keyword id="KW-0880">Kelch repeat</keyword>
<keyword id="KW-0430">Lectin</keyword>
<keyword id="KW-1185">Reference proteome</keyword>
<keyword id="KW-0677">Repeat</keyword>
<protein>
    <recommendedName>
        <fullName>Jacalin-related lectin 38</fullName>
    </recommendedName>
    <alternativeName>
        <fullName>F-box/kelch-repeat protein At3g59610</fullName>
    </alternativeName>
</protein>
<reference key="1">
    <citation type="journal article" date="2000" name="Nature">
        <title>Sequence and analysis of chromosome 3 of the plant Arabidopsis thaliana.</title>
        <authorList>
            <person name="Salanoubat M."/>
            <person name="Lemcke K."/>
            <person name="Rieger M."/>
            <person name="Ansorge W."/>
            <person name="Unseld M."/>
            <person name="Fartmann B."/>
            <person name="Valle G."/>
            <person name="Bloecker H."/>
            <person name="Perez-Alonso M."/>
            <person name="Obermaier B."/>
            <person name="Delseny M."/>
            <person name="Boutry M."/>
            <person name="Grivell L.A."/>
            <person name="Mache R."/>
            <person name="Puigdomenech P."/>
            <person name="De Simone V."/>
            <person name="Choisne N."/>
            <person name="Artiguenave F."/>
            <person name="Robert C."/>
            <person name="Brottier P."/>
            <person name="Wincker P."/>
            <person name="Cattolico L."/>
            <person name="Weissenbach J."/>
            <person name="Saurin W."/>
            <person name="Quetier F."/>
            <person name="Schaefer M."/>
            <person name="Mueller-Auer S."/>
            <person name="Gabel C."/>
            <person name="Fuchs M."/>
            <person name="Benes V."/>
            <person name="Wurmbach E."/>
            <person name="Drzonek H."/>
            <person name="Erfle H."/>
            <person name="Jordan N."/>
            <person name="Bangert S."/>
            <person name="Wiedelmann R."/>
            <person name="Kranz H."/>
            <person name="Voss H."/>
            <person name="Holland R."/>
            <person name="Brandt P."/>
            <person name="Nyakatura G."/>
            <person name="Vezzi A."/>
            <person name="D'Angelo M."/>
            <person name="Pallavicini A."/>
            <person name="Toppo S."/>
            <person name="Simionati B."/>
            <person name="Conrad A."/>
            <person name="Hornischer K."/>
            <person name="Kauer G."/>
            <person name="Loehnert T.-H."/>
            <person name="Nordsiek G."/>
            <person name="Reichelt J."/>
            <person name="Scharfe M."/>
            <person name="Schoen O."/>
            <person name="Bargues M."/>
            <person name="Terol J."/>
            <person name="Climent J."/>
            <person name="Navarro P."/>
            <person name="Collado C."/>
            <person name="Perez-Perez A."/>
            <person name="Ottenwaelder B."/>
            <person name="Duchemin D."/>
            <person name="Cooke R."/>
            <person name="Laudie M."/>
            <person name="Berger-Llauro C."/>
            <person name="Purnelle B."/>
            <person name="Masuy D."/>
            <person name="de Haan M."/>
            <person name="Maarse A.C."/>
            <person name="Alcaraz J.-P."/>
            <person name="Cottet A."/>
            <person name="Casacuberta E."/>
            <person name="Monfort A."/>
            <person name="Argiriou A."/>
            <person name="Flores M."/>
            <person name="Liguori R."/>
            <person name="Vitale D."/>
            <person name="Mannhaupt G."/>
            <person name="Haase D."/>
            <person name="Schoof H."/>
            <person name="Rudd S."/>
            <person name="Zaccaria P."/>
            <person name="Mewes H.-W."/>
            <person name="Mayer K.F.X."/>
            <person name="Kaul S."/>
            <person name="Town C.D."/>
            <person name="Koo H.L."/>
            <person name="Tallon L.J."/>
            <person name="Jenkins J."/>
            <person name="Rooney T."/>
            <person name="Rizzo M."/>
            <person name="Walts A."/>
            <person name="Utterback T."/>
            <person name="Fujii C.Y."/>
            <person name="Shea T.P."/>
            <person name="Creasy T.H."/>
            <person name="Haas B."/>
            <person name="Maiti R."/>
            <person name="Wu D."/>
            <person name="Peterson J."/>
            <person name="Van Aken S."/>
            <person name="Pai G."/>
            <person name="Militscher J."/>
            <person name="Sellers P."/>
            <person name="Gill J.E."/>
            <person name="Feldblyum T.V."/>
            <person name="Preuss D."/>
            <person name="Lin X."/>
            <person name="Nierman W.C."/>
            <person name="Salzberg S.L."/>
            <person name="White O."/>
            <person name="Venter J.C."/>
            <person name="Fraser C.M."/>
            <person name="Kaneko T."/>
            <person name="Nakamura Y."/>
            <person name="Sato S."/>
            <person name="Kato T."/>
            <person name="Asamizu E."/>
            <person name="Sasamoto S."/>
            <person name="Kimura T."/>
            <person name="Idesawa K."/>
            <person name="Kawashima K."/>
            <person name="Kishida Y."/>
            <person name="Kiyokawa C."/>
            <person name="Kohara M."/>
            <person name="Matsumoto M."/>
            <person name="Matsuno A."/>
            <person name="Muraki A."/>
            <person name="Nakayama S."/>
            <person name="Nakazaki N."/>
            <person name="Shinpo S."/>
            <person name="Takeuchi C."/>
            <person name="Wada T."/>
            <person name="Watanabe A."/>
            <person name="Yamada M."/>
            <person name="Yasuda M."/>
            <person name="Tabata S."/>
        </authorList>
    </citation>
    <scope>NUCLEOTIDE SEQUENCE [LARGE SCALE GENOMIC DNA]</scope>
    <source>
        <strain>cv. Columbia</strain>
    </source>
</reference>
<reference key="2">
    <citation type="journal article" date="2017" name="Plant J.">
        <title>Araport11: a complete reannotation of the Arabidopsis thaliana reference genome.</title>
        <authorList>
            <person name="Cheng C.Y."/>
            <person name="Krishnakumar V."/>
            <person name="Chan A.P."/>
            <person name="Thibaud-Nissen F."/>
            <person name="Schobel S."/>
            <person name="Town C.D."/>
        </authorList>
    </citation>
    <scope>GENOME REANNOTATION</scope>
    <source>
        <strain>cv. Columbia</strain>
    </source>
</reference>
<reference key="3">
    <citation type="journal article" date="2008" name="Plant Cell Physiol.">
        <title>Antagonistic jacalin-related lectins regulate the size of ER body-type beta-glucosidase complexes in Arabidopsis thaliana.</title>
        <authorList>
            <person name="Nagano A.J."/>
            <person name="Fukao Y."/>
            <person name="Fujiwara M."/>
            <person name="Nishimura M."/>
            <person name="Hara-Nishimura I."/>
        </authorList>
    </citation>
    <scope>GENE FAMILY</scope>
    <scope>NOMENCLATURE</scope>
</reference>
<accession>Q9M1A7</accession>
<comment type="similarity">
    <text evidence="2 3">Belongs to the jacalin lectin family.</text>
</comment>
<proteinExistence type="evidence at transcript level"/>
<sequence length="521" mass="59914">MMQPDHDLPYDLEGEILSHLPIQILARFRCVCKRWNTLFKERRFFNSDLGLARPQFILLAESKICSVDVNLDGPSIEVHNLPSDIPGYKLYMPMHVEYCDGLFLYATCYGIGICNPWLRQIRWFKSSYEGYDFSGMGYDNSRQDKHYKILGSYCTNTTMNASVTELGSDAWKSYEFAFHSWNLSMSPYSVSLNGNLYWVAYNHESRDYFIQSFDFSTVSFKHYCILPTKNGHRQCDGRSLAIFREDRFSFLEQEIYNTRNIEIWVTKETIKNGDGEAVEWVNLMSVLVPEWSSLSVNYYPPSYFVDEDKVGLTLVICCYNKEGKAYIYIAKGDKFHEIEIKDLVEYNPRHRTYFPNLIQVPTFTMSGRSITQHQVESRFAPLRGIQVSVGVGGDEWDDGFFDNVKEIIIHTNSLGIIFVKFYYRNGNVRVAGAAHGDSTETRGLMVPDDDYIEAVQGTYTESHITSMAFRLHKGNRSLRFGFFEGMSFVLGGARGSKIIGFYGRSSDLYLTAFGVHFSPLP</sequence>
<dbReference type="EMBL" id="AL138659">
    <property type="protein sequence ID" value="CAB75458.1"/>
    <property type="molecule type" value="Genomic_DNA"/>
</dbReference>
<dbReference type="EMBL" id="CP002686">
    <property type="protein sequence ID" value="AEE79945.1"/>
    <property type="molecule type" value="Genomic_DNA"/>
</dbReference>
<dbReference type="PIR" id="T49302">
    <property type="entry name" value="T49302"/>
</dbReference>
<dbReference type="RefSeq" id="NP_191520.1">
    <property type="nucleotide sequence ID" value="NM_115823.2"/>
</dbReference>
<dbReference type="SMR" id="Q9M1A7"/>
<dbReference type="FunCoup" id="Q9M1A7">
    <property type="interactions" value="1"/>
</dbReference>
<dbReference type="STRING" id="3702.Q9M1A7"/>
<dbReference type="PaxDb" id="3702-AT3G59610.1"/>
<dbReference type="EnsemblPlants" id="AT3G59610.1">
    <property type="protein sequence ID" value="AT3G59610.1"/>
    <property type="gene ID" value="AT3G59610"/>
</dbReference>
<dbReference type="GeneID" id="825130"/>
<dbReference type="Gramene" id="AT3G59610.1">
    <property type="protein sequence ID" value="AT3G59610.1"/>
    <property type="gene ID" value="AT3G59610"/>
</dbReference>
<dbReference type="KEGG" id="ath:AT3G59610"/>
<dbReference type="Araport" id="AT3G59610"/>
<dbReference type="TAIR" id="AT3G59610"/>
<dbReference type="HOGENOM" id="CLU_034692_2_1_1"/>
<dbReference type="InParanoid" id="Q9M1A7"/>
<dbReference type="OMA" id="WKSYEFA"/>
<dbReference type="PhylomeDB" id="Q9M1A7"/>
<dbReference type="PRO" id="PR:Q9M1A7"/>
<dbReference type="Proteomes" id="UP000006548">
    <property type="component" value="Chromosome 3"/>
</dbReference>
<dbReference type="ExpressionAtlas" id="Q9M1A7">
    <property type="expression patterns" value="baseline and differential"/>
</dbReference>
<dbReference type="GO" id="GO:0030246">
    <property type="term" value="F:carbohydrate binding"/>
    <property type="evidence" value="ECO:0007669"/>
    <property type="project" value="UniProtKB-KW"/>
</dbReference>
<dbReference type="CDD" id="cd22157">
    <property type="entry name" value="F-box_AtFBW1-like"/>
    <property type="match status" value="1"/>
</dbReference>
<dbReference type="CDD" id="cd09612">
    <property type="entry name" value="Jacalin"/>
    <property type="match status" value="1"/>
</dbReference>
<dbReference type="Gene3D" id="1.20.1280.50">
    <property type="match status" value="1"/>
</dbReference>
<dbReference type="Gene3D" id="2.100.10.30">
    <property type="entry name" value="Jacalin-like lectin domain"/>
    <property type="match status" value="1"/>
</dbReference>
<dbReference type="InterPro" id="IPR006527">
    <property type="entry name" value="F-box-assoc_dom_typ1"/>
</dbReference>
<dbReference type="InterPro" id="IPR017451">
    <property type="entry name" value="F-box-assoc_interact_dom"/>
</dbReference>
<dbReference type="InterPro" id="IPR036047">
    <property type="entry name" value="F-box-like_dom_sf"/>
</dbReference>
<dbReference type="InterPro" id="IPR001810">
    <property type="entry name" value="F-box_dom"/>
</dbReference>
<dbReference type="InterPro" id="IPR001229">
    <property type="entry name" value="Jacalin-like_lectin_dom"/>
</dbReference>
<dbReference type="InterPro" id="IPR033734">
    <property type="entry name" value="Jacalin-like_lectin_dom_plant"/>
</dbReference>
<dbReference type="InterPro" id="IPR036404">
    <property type="entry name" value="Jacalin-like_lectin_dom_sf"/>
</dbReference>
<dbReference type="InterPro" id="IPR050796">
    <property type="entry name" value="SCF_F-box_component"/>
</dbReference>
<dbReference type="NCBIfam" id="TIGR01640">
    <property type="entry name" value="F_box_assoc_1"/>
    <property type="match status" value="1"/>
</dbReference>
<dbReference type="PANTHER" id="PTHR31672">
    <property type="entry name" value="BNACNNG10540D PROTEIN"/>
    <property type="match status" value="1"/>
</dbReference>
<dbReference type="PANTHER" id="PTHR31672:SF13">
    <property type="entry name" value="F-BOX PROTEIN CPR30-LIKE"/>
    <property type="match status" value="1"/>
</dbReference>
<dbReference type="Pfam" id="PF00646">
    <property type="entry name" value="F-box"/>
    <property type="match status" value="1"/>
</dbReference>
<dbReference type="Pfam" id="PF07734">
    <property type="entry name" value="FBA_1"/>
    <property type="match status" value="1"/>
</dbReference>
<dbReference type="Pfam" id="PF01419">
    <property type="entry name" value="Jacalin"/>
    <property type="match status" value="1"/>
</dbReference>
<dbReference type="SMART" id="SM00256">
    <property type="entry name" value="FBOX"/>
    <property type="match status" value="1"/>
</dbReference>
<dbReference type="SMART" id="SM00915">
    <property type="entry name" value="Jacalin"/>
    <property type="match status" value="1"/>
</dbReference>
<dbReference type="SUPFAM" id="SSF81383">
    <property type="entry name" value="F-box domain"/>
    <property type="match status" value="1"/>
</dbReference>
<dbReference type="SUPFAM" id="SSF51101">
    <property type="entry name" value="Mannose-binding lectins"/>
    <property type="match status" value="1"/>
</dbReference>
<dbReference type="PROSITE" id="PS50181">
    <property type="entry name" value="FBOX"/>
    <property type="match status" value="1"/>
</dbReference>
<dbReference type="PROSITE" id="PS51752">
    <property type="entry name" value="JACALIN_LECTIN"/>
    <property type="match status" value="1"/>
</dbReference>
<organism>
    <name type="scientific">Arabidopsis thaliana</name>
    <name type="common">Mouse-ear cress</name>
    <dbReference type="NCBI Taxonomy" id="3702"/>
    <lineage>
        <taxon>Eukaryota</taxon>
        <taxon>Viridiplantae</taxon>
        <taxon>Streptophyta</taxon>
        <taxon>Embryophyta</taxon>
        <taxon>Tracheophyta</taxon>
        <taxon>Spermatophyta</taxon>
        <taxon>Magnoliopsida</taxon>
        <taxon>eudicotyledons</taxon>
        <taxon>Gunneridae</taxon>
        <taxon>Pentapetalae</taxon>
        <taxon>rosids</taxon>
        <taxon>malvids</taxon>
        <taxon>Brassicales</taxon>
        <taxon>Brassicaceae</taxon>
        <taxon>Camelineae</taxon>
        <taxon>Arabidopsis</taxon>
    </lineage>
</organism>
<name>FBK75_ARATH</name>
<feature type="chain" id="PRO_0000283235" description="Jacalin-related lectin 38">
    <location>
        <begin position="1"/>
        <end position="521"/>
    </location>
</feature>
<feature type="domain" description="F-box" evidence="1">
    <location>
        <begin position="2"/>
        <end position="48"/>
    </location>
</feature>
<feature type="repeat" description="Kelch 1">
    <location>
        <begin position="145"/>
        <end position="190"/>
    </location>
</feature>
<feature type="repeat" description="Kelch 2">
    <location>
        <begin position="326"/>
        <end position="373"/>
    </location>
</feature>
<feature type="domain" description="Jacalin-type lectin" evidence="2">
    <location>
        <begin position="377"/>
        <end position="519"/>
    </location>
</feature>
<feature type="repeat" description="Kelch 3">
    <location>
        <begin position="486"/>
        <end position="521"/>
    </location>
</feature>
<gene>
    <name type="primary">JAL38</name>
    <name type="ordered locus">At3g59610</name>
    <name type="ORF">T16L24.160</name>
</gene>